<gene>
    <name evidence="1" type="primary">mtnB</name>
    <name type="ordered locus">PA14_42740</name>
</gene>
<proteinExistence type="inferred from homology"/>
<accession>Q02KH3</accession>
<organism>
    <name type="scientific">Pseudomonas aeruginosa (strain UCBPP-PA14)</name>
    <dbReference type="NCBI Taxonomy" id="208963"/>
    <lineage>
        <taxon>Bacteria</taxon>
        <taxon>Pseudomonadati</taxon>
        <taxon>Pseudomonadota</taxon>
        <taxon>Gammaproteobacteria</taxon>
        <taxon>Pseudomonadales</taxon>
        <taxon>Pseudomonadaceae</taxon>
        <taxon>Pseudomonas</taxon>
    </lineage>
</organism>
<sequence>MNDNREQLTQQIIDAGRFLYGRGWSPATSSNYSARLDEQRALLTVSGKHKGQLGFDDVLATDLAGNSLEPGKKPSAETLLHTQLYAWNPAIGAVLHTHSVNATVLSRLVRGDRLVLQDYELQKAFAGVTTHEGQVEVPIFDNDQDIARLASRVQPWLEAHPYCPGYLIRGHGLYTWGARMSDALRQVEAFEFLFECELKVLSLSR</sequence>
<dbReference type="EC" id="4.2.1.109" evidence="1"/>
<dbReference type="EMBL" id="CP000438">
    <property type="protein sequence ID" value="ABJ10868.1"/>
    <property type="molecule type" value="Genomic_DNA"/>
</dbReference>
<dbReference type="RefSeq" id="WP_003110430.1">
    <property type="nucleotide sequence ID" value="NZ_CP034244.1"/>
</dbReference>
<dbReference type="SMR" id="Q02KH3"/>
<dbReference type="KEGG" id="pau:PA14_42740"/>
<dbReference type="PseudoCAP" id="PA14_42740"/>
<dbReference type="HOGENOM" id="CLU_006033_4_1_6"/>
<dbReference type="BioCyc" id="PAER208963:G1G74-3583-MONOMER"/>
<dbReference type="UniPathway" id="UPA00904">
    <property type="reaction ID" value="UER00875"/>
</dbReference>
<dbReference type="Proteomes" id="UP000000653">
    <property type="component" value="Chromosome"/>
</dbReference>
<dbReference type="GO" id="GO:0005737">
    <property type="term" value="C:cytoplasm"/>
    <property type="evidence" value="ECO:0007669"/>
    <property type="project" value="InterPro"/>
</dbReference>
<dbReference type="GO" id="GO:0046570">
    <property type="term" value="F:methylthioribulose 1-phosphate dehydratase activity"/>
    <property type="evidence" value="ECO:0007669"/>
    <property type="project" value="UniProtKB-UniRule"/>
</dbReference>
<dbReference type="GO" id="GO:0008270">
    <property type="term" value="F:zinc ion binding"/>
    <property type="evidence" value="ECO:0007669"/>
    <property type="project" value="UniProtKB-UniRule"/>
</dbReference>
<dbReference type="GO" id="GO:0019509">
    <property type="term" value="P:L-methionine salvage from methylthioadenosine"/>
    <property type="evidence" value="ECO:0007669"/>
    <property type="project" value="UniProtKB-UniRule"/>
</dbReference>
<dbReference type="GO" id="GO:0005996">
    <property type="term" value="P:monosaccharide metabolic process"/>
    <property type="evidence" value="ECO:0007669"/>
    <property type="project" value="UniProtKB-ARBA"/>
</dbReference>
<dbReference type="FunFam" id="3.40.225.10:FF:000007">
    <property type="entry name" value="Methylthioribulose-1-phosphate dehydratase"/>
    <property type="match status" value="1"/>
</dbReference>
<dbReference type="Gene3D" id="3.40.225.10">
    <property type="entry name" value="Class II aldolase/adducin N-terminal domain"/>
    <property type="match status" value="1"/>
</dbReference>
<dbReference type="HAMAP" id="MF_01677">
    <property type="entry name" value="Salvage_MtnB"/>
    <property type="match status" value="1"/>
</dbReference>
<dbReference type="InterPro" id="IPR001303">
    <property type="entry name" value="Aldolase_II/adducin_N"/>
</dbReference>
<dbReference type="InterPro" id="IPR036409">
    <property type="entry name" value="Aldolase_II/adducin_N_sf"/>
</dbReference>
<dbReference type="InterPro" id="IPR017714">
    <property type="entry name" value="MethylthioRu-1-P_deHdtase_MtnB"/>
</dbReference>
<dbReference type="NCBIfam" id="NF006672">
    <property type="entry name" value="PRK09220.1"/>
    <property type="match status" value="1"/>
</dbReference>
<dbReference type="NCBIfam" id="TIGR03328">
    <property type="entry name" value="salvage_mtnB"/>
    <property type="match status" value="1"/>
</dbReference>
<dbReference type="PANTHER" id="PTHR10640">
    <property type="entry name" value="METHYLTHIORIBULOSE-1-PHOSPHATE DEHYDRATASE"/>
    <property type="match status" value="1"/>
</dbReference>
<dbReference type="PANTHER" id="PTHR10640:SF7">
    <property type="entry name" value="METHYLTHIORIBULOSE-1-PHOSPHATE DEHYDRATASE"/>
    <property type="match status" value="1"/>
</dbReference>
<dbReference type="Pfam" id="PF00596">
    <property type="entry name" value="Aldolase_II"/>
    <property type="match status" value="1"/>
</dbReference>
<dbReference type="SMART" id="SM01007">
    <property type="entry name" value="Aldolase_II"/>
    <property type="match status" value="1"/>
</dbReference>
<dbReference type="SUPFAM" id="SSF53639">
    <property type="entry name" value="AraD/HMP-PK domain-like"/>
    <property type="match status" value="1"/>
</dbReference>
<evidence type="ECO:0000255" key="1">
    <source>
        <dbReference type="HAMAP-Rule" id="MF_01677"/>
    </source>
</evidence>
<protein>
    <recommendedName>
        <fullName evidence="1">Methylthioribulose-1-phosphate dehydratase</fullName>
        <shortName evidence="1">MTRu-1-P dehydratase</shortName>
        <ecNumber evidence="1">4.2.1.109</ecNumber>
    </recommendedName>
</protein>
<reference key="1">
    <citation type="journal article" date="2006" name="Genome Biol.">
        <title>Genomic analysis reveals that Pseudomonas aeruginosa virulence is combinatorial.</title>
        <authorList>
            <person name="Lee D.G."/>
            <person name="Urbach J.M."/>
            <person name="Wu G."/>
            <person name="Liberati N.T."/>
            <person name="Feinbaum R.L."/>
            <person name="Miyata S."/>
            <person name="Diggins L.T."/>
            <person name="He J."/>
            <person name="Saucier M."/>
            <person name="Deziel E."/>
            <person name="Friedman L."/>
            <person name="Li L."/>
            <person name="Grills G."/>
            <person name="Montgomery K."/>
            <person name="Kucherlapati R."/>
            <person name="Rahme L.G."/>
            <person name="Ausubel F.M."/>
        </authorList>
    </citation>
    <scope>NUCLEOTIDE SEQUENCE [LARGE SCALE GENOMIC DNA]</scope>
    <source>
        <strain>UCBPP-PA14</strain>
    </source>
</reference>
<comment type="function">
    <text evidence="1">Catalyzes the dehydration of methylthioribulose-1-phosphate (MTRu-1-P) into 2,3-diketo-5-methylthiopentyl-1-phosphate (DK-MTP-1-P).</text>
</comment>
<comment type="catalytic activity">
    <reaction evidence="1">
        <text>5-(methylsulfanyl)-D-ribulose 1-phosphate = 5-methylsulfanyl-2,3-dioxopentyl phosphate + H2O</text>
        <dbReference type="Rhea" id="RHEA:15549"/>
        <dbReference type="ChEBI" id="CHEBI:15377"/>
        <dbReference type="ChEBI" id="CHEBI:58548"/>
        <dbReference type="ChEBI" id="CHEBI:58828"/>
        <dbReference type="EC" id="4.2.1.109"/>
    </reaction>
</comment>
<comment type="cofactor">
    <cofactor evidence="1">
        <name>Zn(2+)</name>
        <dbReference type="ChEBI" id="CHEBI:29105"/>
    </cofactor>
    <text evidence="1">Binds 1 zinc ion per subunit.</text>
</comment>
<comment type="pathway">
    <text evidence="1">Amino-acid biosynthesis; L-methionine biosynthesis via salvage pathway; L-methionine from S-methyl-5-thio-alpha-D-ribose 1-phosphate: step 2/6.</text>
</comment>
<comment type="similarity">
    <text evidence="1">Belongs to the aldolase class II family. MtnB subfamily.</text>
</comment>
<name>MTNB_PSEAB</name>
<feature type="chain" id="PRO_0000357099" description="Methylthioribulose-1-phosphate dehydratase">
    <location>
        <begin position="1"/>
        <end position="205"/>
    </location>
</feature>
<feature type="binding site" evidence="1">
    <location>
        <position position="96"/>
    </location>
    <ligand>
        <name>Zn(2+)</name>
        <dbReference type="ChEBI" id="CHEBI:29105"/>
    </ligand>
</feature>
<feature type="binding site" evidence="1">
    <location>
        <position position="98"/>
    </location>
    <ligand>
        <name>Zn(2+)</name>
        <dbReference type="ChEBI" id="CHEBI:29105"/>
    </ligand>
</feature>
<keyword id="KW-0028">Amino-acid biosynthesis</keyword>
<keyword id="KW-0456">Lyase</keyword>
<keyword id="KW-0479">Metal-binding</keyword>
<keyword id="KW-0486">Methionine biosynthesis</keyword>
<keyword id="KW-0862">Zinc</keyword>